<keyword id="KW-0687">Ribonucleoprotein</keyword>
<keyword id="KW-0689">Ribosomal protein</keyword>
<keyword id="KW-0694">RNA-binding</keyword>
<keyword id="KW-0699">rRNA-binding</keyword>
<proteinExistence type="inferred from homology"/>
<sequence length="200" mass="21728">MNLKTVTGAAVELSDTAFGREFNEALVHQVVTAYLAGARQGTRAQKTRAEVSGGGKKPWRQKGTGRARAGSTRSPIWVGGGRAFAAKPQDWSQKVNRKMYRGAMQCILAELVRQDRLILVDSITVSAPKTKELISKLAELNAPRALIVTNEVDENLYLAARNIPHVNVLGTNEVDPVSLIAFDKVIMSVDAAKQFEEALA</sequence>
<evidence type="ECO:0000255" key="1">
    <source>
        <dbReference type="HAMAP-Rule" id="MF_01328"/>
    </source>
</evidence>
<evidence type="ECO:0000256" key="2">
    <source>
        <dbReference type="SAM" id="MobiDB-lite"/>
    </source>
</evidence>
<evidence type="ECO:0000305" key="3"/>
<protein>
    <recommendedName>
        <fullName evidence="1">Large ribosomal subunit protein uL4</fullName>
    </recommendedName>
    <alternativeName>
        <fullName evidence="3">50S ribosomal protein L4</fullName>
    </alternativeName>
</protein>
<comment type="function">
    <text evidence="1">One of the primary rRNA binding proteins, this protein initially binds near the 5'-end of the 23S rRNA. It is important during the early stages of 50S assembly. It makes multiple contacts with different domains of the 23S rRNA in the assembled 50S subunit and ribosome.</text>
</comment>
<comment type="function">
    <text evidence="1">Forms part of the polypeptide exit tunnel.</text>
</comment>
<comment type="subunit">
    <text evidence="1">Part of the 50S ribosomal subunit.</text>
</comment>
<comment type="similarity">
    <text evidence="1">Belongs to the universal ribosomal protein uL4 family.</text>
</comment>
<name>RL4_PSYWF</name>
<organism>
    <name type="scientific">Psychrobacter sp. (strain PRwf-1)</name>
    <dbReference type="NCBI Taxonomy" id="349106"/>
    <lineage>
        <taxon>Bacteria</taxon>
        <taxon>Pseudomonadati</taxon>
        <taxon>Pseudomonadota</taxon>
        <taxon>Gammaproteobacteria</taxon>
        <taxon>Moraxellales</taxon>
        <taxon>Moraxellaceae</taxon>
        <taxon>Psychrobacter</taxon>
    </lineage>
</organism>
<dbReference type="EMBL" id="CP000713">
    <property type="protein sequence ID" value="ABQ93382.1"/>
    <property type="molecule type" value="Genomic_DNA"/>
</dbReference>
<dbReference type="SMR" id="A5WCJ1"/>
<dbReference type="STRING" id="349106.PsycPRwf_0427"/>
<dbReference type="KEGG" id="prw:PsycPRwf_0427"/>
<dbReference type="eggNOG" id="COG0088">
    <property type="taxonomic scope" value="Bacteria"/>
</dbReference>
<dbReference type="HOGENOM" id="CLU_041575_5_2_6"/>
<dbReference type="GO" id="GO:1990904">
    <property type="term" value="C:ribonucleoprotein complex"/>
    <property type="evidence" value="ECO:0007669"/>
    <property type="project" value="UniProtKB-KW"/>
</dbReference>
<dbReference type="GO" id="GO:0005840">
    <property type="term" value="C:ribosome"/>
    <property type="evidence" value="ECO:0007669"/>
    <property type="project" value="UniProtKB-KW"/>
</dbReference>
<dbReference type="GO" id="GO:0019843">
    <property type="term" value="F:rRNA binding"/>
    <property type="evidence" value="ECO:0007669"/>
    <property type="project" value="UniProtKB-UniRule"/>
</dbReference>
<dbReference type="GO" id="GO:0003735">
    <property type="term" value="F:structural constituent of ribosome"/>
    <property type="evidence" value="ECO:0007669"/>
    <property type="project" value="InterPro"/>
</dbReference>
<dbReference type="GO" id="GO:0006412">
    <property type="term" value="P:translation"/>
    <property type="evidence" value="ECO:0007669"/>
    <property type="project" value="UniProtKB-UniRule"/>
</dbReference>
<dbReference type="FunFam" id="3.40.1370.10:FF:000001">
    <property type="entry name" value="50S ribosomal protein L4"/>
    <property type="match status" value="1"/>
</dbReference>
<dbReference type="Gene3D" id="3.40.1370.10">
    <property type="match status" value="1"/>
</dbReference>
<dbReference type="HAMAP" id="MF_01328_B">
    <property type="entry name" value="Ribosomal_uL4_B"/>
    <property type="match status" value="1"/>
</dbReference>
<dbReference type="InterPro" id="IPR002136">
    <property type="entry name" value="Ribosomal_uL4"/>
</dbReference>
<dbReference type="InterPro" id="IPR013005">
    <property type="entry name" value="Ribosomal_uL4-like"/>
</dbReference>
<dbReference type="InterPro" id="IPR023574">
    <property type="entry name" value="Ribosomal_uL4_dom_sf"/>
</dbReference>
<dbReference type="NCBIfam" id="TIGR03953">
    <property type="entry name" value="rplD_bact"/>
    <property type="match status" value="1"/>
</dbReference>
<dbReference type="PANTHER" id="PTHR10746">
    <property type="entry name" value="50S RIBOSOMAL PROTEIN L4"/>
    <property type="match status" value="1"/>
</dbReference>
<dbReference type="PANTHER" id="PTHR10746:SF6">
    <property type="entry name" value="LARGE RIBOSOMAL SUBUNIT PROTEIN UL4M"/>
    <property type="match status" value="1"/>
</dbReference>
<dbReference type="Pfam" id="PF00573">
    <property type="entry name" value="Ribosomal_L4"/>
    <property type="match status" value="1"/>
</dbReference>
<dbReference type="SUPFAM" id="SSF52166">
    <property type="entry name" value="Ribosomal protein L4"/>
    <property type="match status" value="1"/>
</dbReference>
<feature type="chain" id="PRO_1000073272" description="Large ribosomal subunit protein uL4">
    <location>
        <begin position="1"/>
        <end position="200"/>
    </location>
</feature>
<feature type="region of interest" description="Disordered" evidence="2">
    <location>
        <begin position="44"/>
        <end position="71"/>
    </location>
</feature>
<reference key="1">
    <citation type="submission" date="2007-05" db="EMBL/GenBank/DDBJ databases">
        <title>Complete sequence of chromosome of Psychrobacter sp. PRwf-1.</title>
        <authorList>
            <consortium name="US DOE Joint Genome Institute"/>
            <person name="Copeland A."/>
            <person name="Lucas S."/>
            <person name="Lapidus A."/>
            <person name="Barry K."/>
            <person name="Detter J.C."/>
            <person name="Glavina del Rio T."/>
            <person name="Hammon N."/>
            <person name="Israni S."/>
            <person name="Dalin E."/>
            <person name="Tice H."/>
            <person name="Pitluck S."/>
            <person name="Chain P."/>
            <person name="Malfatti S."/>
            <person name="Shin M."/>
            <person name="Vergez L."/>
            <person name="Schmutz J."/>
            <person name="Larimer F."/>
            <person name="Land M."/>
            <person name="Hauser L."/>
            <person name="Kyrpides N."/>
            <person name="Kim E."/>
            <person name="Tiedje J."/>
            <person name="Richardson P."/>
        </authorList>
    </citation>
    <scope>NUCLEOTIDE SEQUENCE [LARGE SCALE GENOMIC DNA]</scope>
    <source>
        <strain>PRwf-1</strain>
    </source>
</reference>
<gene>
    <name evidence="1" type="primary">rplD</name>
    <name type="ordered locus">PsycPRwf_0427</name>
</gene>
<accession>A5WCJ1</accession>